<gene>
    <name type="ordered locus">TK1890</name>
</gene>
<dbReference type="EMBL" id="AP006878">
    <property type="protein sequence ID" value="BAD86079.1"/>
    <property type="molecule type" value="Genomic_DNA"/>
</dbReference>
<dbReference type="RefSeq" id="WP_011250841.1">
    <property type="nucleotide sequence ID" value="NC_006624.1"/>
</dbReference>
<dbReference type="SMR" id="Q5JER1"/>
<dbReference type="STRING" id="69014.TK1890"/>
<dbReference type="EnsemblBacteria" id="BAD86079">
    <property type="protein sequence ID" value="BAD86079"/>
    <property type="gene ID" value="TK1890"/>
</dbReference>
<dbReference type="GeneID" id="78448421"/>
<dbReference type="KEGG" id="tko:TK1890"/>
<dbReference type="PATRIC" id="fig|69014.16.peg.1848"/>
<dbReference type="eggNOG" id="arCOG04225">
    <property type="taxonomic scope" value="Archaea"/>
</dbReference>
<dbReference type="HOGENOM" id="CLU_046550_5_1_2"/>
<dbReference type="InParanoid" id="Q5JER1"/>
<dbReference type="OrthoDB" id="15450at2157"/>
<dbReference type="PhylomeDB" id="Q5JER1"/>
<dbReference type="Proteomes" id="UP000000536">
    <property type="component" value="Chromosome"/>
</dbReference>
<dbReference type="Gene3D" id="3.40.220.10">
    <property type="entry name" value="Leucine Aminopeptidase, subunit E, domain 1"/>
    <property type="match status" value="1"/>
</dbReference>
<dbReference type="InterPro" id="IPR002589">
    <property type="entry name" value="Macro_dom"/>
</dbReference>
<dbReference type="InterPro" id="IPR043472">
    <property type="entry name" value="Macro_dom-like"/>
</dbReference>
<dbReference type="NCBIfam" id="NF001662">
    <property type="entry name" value="PRK00431.1-3"/>
    <property type="match status" value="1"/>
</dbReference>
<dbReference type="PANTHER" id="PTHR11106">
    <property type="entry name" value="GANGLIOSIDE INDUCED DIFFERENTIATION ASSOCIATED PROTEIN 2-RELATED"/>
    <property type="match status" value="1"/>
</dbReference>
<dbReference type="PANTHER" id="PTHR11106:SF27">
    <property type="entry name" value="MACRO DOMAIN-CONTAINING PROTEIN"/>
    <property type="match status" value="1"/>
</dbReference>
<dbReference type="Pfam" id="PF01661">
    <property type="entry name" value="Macro"/>
    <property type="match status" value="1"/>
</dbReference>
<dbReference type="SMART" id="SM00506">
    <property type="entry name" value="A1pp"/>
    <property type="match status" value="1"/>
</dbReference>
<dbReference type="SUPFAM" id="SSF52949">
    <property type="entry name" value="Macro domain-like"/>
    <property type="match status" value="1"/>
</dbReference>
<dbReference type="PROSITE" id="PS51154">
    <property type="entry name" value="MACRO"/>
    <property type="match status" value="1"/>
</dbReference>
<organism>
    <name type="scientific">Thermococcus kodakarensis (strain ATCC BAA-918 / JCM 12380 / KOD1)</name>
    <name type="common">Pyrococcus kodakaraensis (strain KOD1)</name>
    <dbReference type="NCBI Taxonomy" id="69014"/>
    <lineage>
        <taxon>Archaea</taxon>
        <taxon>Methanobacteriati</taxon>
        <taxon>Methanobacteriota</taxon>
        <taxon>Thermococci</taxon>
        <taxon>Thermococcales</taxon>
        <taxon>Thermococcaceae</taxon>
        <taxon>Thermococcus</taxon>
    </lineage>
</organism>
<accession>Q5JER1</accession>
<reference key="1">
    <citation type="journal article" date="2005" name="Genome Res.">
        <title>Complete genome sequence of the hyperthermophilic archaeon Thermococcus kodakaraensis KOD1 and comparison with Pyrococcus genomes.</title>
        <authorList>
            <person name="Fukui T."/>
            <person name="Atomi H."/>
            <person name="Kanai T."/>
            <person name="Matsumi R."/>
            <person name="Fujiwara S."/>
            <person name="Imanaka T."/>
        </authorList>
    </citation>
    <scope>NUCLEOTIDE SEQUENCE [LARGE SCALE GENOMIC DNA]</scope>
    <source>
        <strain>ATCC BAA-918 / JCM 12380 / KOD1</strain>
    </source>
</reference>
<keyword id="KW-1185">Reference proteome</keyword>
<name>Y1890_THEKO</name>
<sequence>MVEFEIVKGDITRFPAEAIVNAANRYLEHGGGVAYAIAKAAAGDPREYIRISKEAMREQLGKDHIEHGEVVVTPAMRLEKHGIRYVIHTVGPYCGGIWDEDKKEKLRKAILGALRKAEELGVKTIAFPAVSAGIYGCPLEEVVKTFKEVIDEFEREAGSVERVYLVLYSEKDYERALRAV</sequence>
<proteinExistence type="predicted"/>
<protein>
    <recommendedName>
        <fullName>Uncharacterized protein TK1890</fullName>
    </recommendedName>
</protein>
<evidence type="ECO:0000255" key="1">
    <source>
        <dbReference type="PROSITE-ProRule" id="PRU00490"/>
    </source>
</evidence>
<feature type="chain" id="PRO_0000089235" description="Uncharacterized protein TK1890">
    <location>
        <begin position="1"/>
        <end position="180"/>
    </location>
</feature>
<feature type="domain" description="Macro" evidence="1">
    <location>
        <begin position="1"/>
        <end position="180"/>
    </location>
</feature>